<accession>Q91DM0</accession>
<keyword id="KW-0064">Aspartyl protease</keyword>
<keyword id="KW-0175">Coiled coil</keyword>
<keyword id="KW-0238">DNA-binding</keyword>
<keyword id="KW-0255">Endonuclease</keyword>
<keyword id="KW-0378">Hydrolase</keyword>
<keyword id="KW-0460">Magnesium</keyword>
<keyword id="KW-0479">Metal-binding</keyword>
<keyword id="KW-0540">Nuclease</keyword>
<keyword id="KW-0548">Nucleotidyltransferase</keyword>
<keyword id="KW-0645">Protease</keyword>
<keyword id="KW-1185">Reference proteome</keyword>
<keyword id="KW-0695">RNA-directed DNA polymerase</keyword>
<keyword id="KW-0808">Transferase</keyword>
<keyword id="KW-0813">Transport</keyword>
<keyword id="KW-0916">Viral movement protein</keyword>
<keyword id="KW-0862">Zinc</keyword>
<keyword id="KW-0863">Zinc-finger</keyword>
<comment type="function">
    <text evidence="5">Encodes presumably for at least four polypeptides: Movement protein (MP), capsid protein (CP), Protease (PR), and reverse transcriptase (RT).</text>
</comment>
<comment type="catalytic activity">
    <reaction evidence="3">
        <text>DNA(n) + a 2'-deoxyribonucleoside 5'-triphosphate = DNA(n+1) + diphosphate</text>
        <dbReference type="Rhea" id="RHEA:22508"/>
        <dbReference type="Rhea" id="RHEA-COMP:17339"/>
        <dbReference type="Rhea" id="RHEA-COMP:17340"/>
        <dbReference type="ChEBI" id="CHEBI:33019"/>
        <dbReference type="ChEBI" id="CHEBI:61560"/>
        <dbReference type="ChEBI" id="CHEBI:173112"/>
        <dbReference type="EC" id="2.7.7.49"/>
    </reaction>
</comment>
<comment type="catalytic activity">
    <reaction evidence="3">
        <text>DNA(n) + a 2'-deoxyribonucleoside 5'-triphosphate = DNA(n+1) + diphosphate</text>
        <dbReference type="Rhea" id="RHEA:22508"/>
        <dbReference type="Rhea" id="RHEA-COMP:17339"/>
        <dbReference type="Rhea" id="RHEA-COMP:17340"/>
        <dbReference type="ChEBI" id="CHEBI:33019"/>
        <dbReference type="ChEBI" id="CHEBI:61560"/>
        <dbReference type="ChEBI" id="CHEBI:173112"/>
        <dbReference type="EC" id="2.7.7.7"/>
    </reaction>
</comment>
<comment type="similarity">
    <text evidence="5">Belongs to the Petuviruses genome polyprotein family.</text>
</comment>
<reference key="1">
    <citation type="journal article" date="1997" name="Virology">
        <title>Petunia vein-clearing virus: a plant pararetrovirus with the core sequences for an integrase function.</title>
        <authorList>
            <person name="Richert-Poggeler K.R."/>
            <person name="Shepherd R.J."/>
        </authorList>
    </citation>
    <scope>NUCLEOTIDE SEQUENCE [GENOMIC RNA]</scope>
</reference>
<reference key="2">
    <citation type="submission" date="2001-06" db="EMBL/GenBank/DDBJ databases">
        <title>Isolation of an infectious full-length clone of petunia vein clearing virus (PVCV) from infected Nicotiana glutinosa.</title>
        <authorList>
            <person name="Richert-Poeggeler K.R."/>
            <person name="Hohn T."/>
        </authorList>
    </citation>
    <scope>NUCLEOTIDE SEQUENCE [GENOMIC RNA]</scope>
</reference>
<protein>
    <recommendedName>
        <fullName>Genome polyprotein</fullName>
    </recommendedName>
    <domain>
        <recommendedName>
            <fullName>Aspartic protease</fullName>
            <shortName>PR</shortName>
            <ecNumber>3.4.23.-</ecNumber>
        </recommendedName>
    </domain>
    <domain>
        <recommendedName>
            <fullName>Reverse transcriptase</fullName>
            <shortName>RT</shortName>
            <ecNumber evidence="3">2.7.7.49</ecNumber>
            <ecNumber evidence="3">2.7.7.7</ecNumber>
        </recommendedName>
    </domain>
</protein>
<feature type="chain" id="PRO_0000318062" description="Genome polyprotein">
    <location>
        <begin position="1"/>
        <end position="2179"/>
    </location>
</feature>
<feature type="domain" description="Reverse transcriptase" evidence="3">
    <location>
        <begin position="1409"/>
        <end position="1591"/>
    </location>
</feature>
<feature type="zinc finger region" description="CCHC-type" evidence="2">
    <location>
        <begin position="1112"/>
        <end position="1125"/>
    </location>
</feature>
<feature type="region of interest" description="Disordered" evidence="4">
    <location>
        <begin position="503"/>
        <end position="531"/>
    </location>
</feature>
<feature type="region of interest" description="Disordered" evidence="4">
    <location>
        <begin position="623"/>
        <end position="678"/>
    </location>
</feature>
<feature type="region of interest" description="Disordered" evidence="4">
    <location>
        <begin position="703"/>
        <end position="738"/>
    </location>
</feature>
<feature type="region of interest" description="Disordered" evidence="4">
    <location>
        <begin position="753"/>
        <end position="847"/>
    </location>
</feature>
<feature type="region of interest" description="Disordered" evidence="4">
    <location>
        <begin position="1822"/>
        <end position="1848"/>
    </location>
</feature>
<feature type="region of interest" description="Disordered" evidence="4">
    <location>
        <begin position="2114"/>
        <end position="2144"/>
    </location>
</feature>
<feature type="region of interest" description="Disordered" evidence="4">
    <location>
        <begin position="2160"/>
        <end position="2179"/>
    </location>
</feature>
<feature type="compositionally biased region" description="Polar residues" evidence="4">
    <location>
        <begin position="630"/>
        <end position="642"/>
    </location>
</feature>
<feature type="compositionally biased region" description="Polar residues" evidence="4">
    <location>
        <begin position="659"/>
        <end position="678"/>
    </location>
</feature>
<feature type="compositionally biased region" description="Polar residues" evidence="4">
    <location>
        <begin position="758"/>
        <end position="770"/>
    </location>
</feature>
<feature type="compositionally biased region" description="Low complexity" evidence="4">
    <location>
        <begin position="783"/>
        <end position="806"/>
    </location>
</feature>
<feature type="compositionally biased region" description="Acidic residues" evidence="4">
    <location>
        <begin position="819"/>
        <end position="831"/>
    </location>
</feature>
<feature type="compositionally biased region" description="Low complexity" evidence="4">
    <location>
        <begin position="1827"/>
        <end position="1840"/>
    </location>
</feature>
<feature type="compositionally biased region" description="Basic residues" evidence="4">
    <location>
        <begin position="2120"/>
        <end position="2144"/>
    </location>
</feature>
<feature type="compositionally biased region" description="Polar residues" evidence="4">
    <location>
        <begin position="2162"/>
        <end position="2179"/>
    </location>
</feature>
<feature type="active site" description="For protease activity; shared with dimeric partner" evidence="1">
    <location>
        <position position="1226"/>
    </location>
</feature>
<feature type="binding site" evidence="3">
    <location>
        <position position="1479"/>
    </location>
    <ligand>
        <name>Mg(2+)</name>
        <dbReference type="ChEBI" id="CHEBI:18420"/>
        <note>catalytic; for reverse transcriptase activity</note>
    </ligand>
</feature>
<feature type="binding site" evidence="3">
    <location>
        <position position="1542"/>
    </location>
    <ligand>
        <name>Mg(2+)</name>
        <dbReference type="ChEBI" id="CHEBI:18420"/>
        <note>catalytic; for reverse transcriptase activity</note>
    </ligand>
</feature>
<feature type="binding site" evidence="3">
    <location>
        <position position="1543"/>
    </location>
    <ligand>
        <name>Mg(2+)</name>
        <dbReference type="ChEBI" id="CHEBI:18420"/>
        <note>catalytic; for reverse transcriptase activity</note>
    </ligand>
</feature>
<proteinExistence type="inferred from homology"/>
<organism>
    <name type="scientific">Petunia vein clearing virus (isolate Shepherd)</name>
    <name type="common">PVCV</name>
    <dbReference type="NCBI Taxonomy" id="492094"/>
    <lineage>
        <taxon>Viruses</taxon>
        <taxon>Riboviria</taxon>
        <taxon>Pararnavirae</taxon>
        <taxon>Artverviricota</taxon>
        <taxon>Revtraviricetes</taxon>
        <taxon>Ortervirales</taxon>
        <taxon>Caulimoviridae</taxon>
        <taxon>Petuvirus</taxon>
        <taxon>Petuvirus venapetuniae</taxon>
    </lineage>
</organism>
<sequence length="2179" mass="252214">MTSPSDYQSNSSLATTYSNAPKLSKALSNKYDYLYEVDILKENQKISDTYLPLLNPYSAFAKRSVTPWSQIRSLVQSKPRHVKEYVAASKLDQHPVFATGEEQFVTLHIPEEFASHWKSHQFTHIHFGAVKIALTYHGRKGQPVVARLALLDTRYLEYQHANLGTAEITLNAGTVFITLFPNFTMSLSDANLSTALKIQVQIQGAPLTKDSIQATLHYQIAWRVQNHAMDLTLPGGEEALFLKIDAGSGATQCTQVPRQLSKEDLIKILPDSWVTNYEKLREPEEPLRSTEVSMSKRHDKSVAISFDHSHYKKLRNTHHFMGMISDDVIVLDDPETFSKTLPSLMQTHDWIHHFQLDGRAVSWYKDPFDGHCPWDIDCQCYSCLYSEDEEDFEDGFPTKYKGIPRPGSIAERKMQEEANLKKLYEEKDPFVGSLSRPGKYEYLVRYDAPSWAKDPHLTVEPTGWDSDEPIPPKQPFTTRNTLPKIYMFNPLNYENNFPPLSSFSKDGADHTPKIPKRNVVLPSGAKDPTGDLEATVNWQTENALAQNRMLTTIDRTLKETVTKVDRVTDQSSKNQGLIKVLEQQLQDLNKRICPPGTSLFHFFDQQKSEMASLKEQIRLLKEQPQKNETDTPSYQSSYQPFHSFSSPYMPSNPPNSPFTTFANTPQPQPSLFSQYPIQPKSPNTFDLAKLVWEKKDAIAAEKRAKKKLQKDEVKQKTSLPPESKRPDPQSSSHLGDQFMISDPALPKVYALNEPSVPSEDTSSQSYISTEESVEDTDSFSVVSEESTQLSQLSSSSNDSPENNENTLPQTFMVRPTEPEISEVEDEVDGMTEEPIPERRPEITPPKMVGTGFHTFSLDDISITKWPERIQDFHTWMLTKQLVEREPFLILSEFTARLSGTLREWWNSVGPDDKNRFLTSQDFTWNIRILYSYFCGDQSQNKEELRRQIFEMKCLSYDRKKIDRHFQRMIKLFYHIGGDISLKQAFISSLPPILSERISALIKERGTSVTQMHVGDIRQTAFYVLDDLCSKRKFFNQMKKMSRDLEKACTKSDLIIKGDKGCSGYCNPSRRRKYKRFKLPSFKERDGRQYRKRRRFFRRSKTSKAMRQKPRSCFTCGKIGHFSRNCPQNKKSIKLISEIQKYTGIDIEDDLESVFSIEDEPSEDTLFSLEFYEEYAGEQYQITSYEAPKTENPPLPKIHTIVEIPQTEVKIYTSKWDKPISVIAFYDTGAAYSIMDPAILPSEYWIPHFRHFGTADDGILTTTVKTKHPITIEFFPGFKYTTKLLGSDIPGKDLLIGFDIYRQLNNKLRIGADGIRWKNQFKRYTEIPRLFQLTTSNELQQLEDVIKNQLCADSHVDFLSKCSHPLWLNQDFFIQLPFKKNENINPTKASHSGMNPEHLQLAIKECDELQQFDLIEPSDSQWACEAFYVNKRSEQVRGKLRLVINYQPLNHFLQDDKFPIPNKLTLFSHLSKAKLFSKFDLKSGFWQLGIHPNERPKTGFCIPDRHFQWKVMPFGLKTAPSLFQKAMIKIFQPILFSALVYIDDILLFSETLEDHIKLLNQFISLVKKFGVMLSAKKMILAQNKIQFLGMDFADGTFSPAGHISLELQKFPDTNLSVKQIQQFLGIVNYIRDFIPEVTEHISPLSDMLKKKPPAWGKCQDNAVKQLKQLAQQVKSLHIPSEGKKILQTDASDQYWSAVLLEEHNGKRKICGFASGKFKVSEQHYHSTFKEILAVKNGIKKFNFFLIHTNFLVEMDMRAFPKMIRLNPKIVPNSQLLRWAQWFSPYQFEVKHLKGKDNILADFLSRPHEFSQRLKNSPKVLMFQRRTRSSSTKSKADSSQSTGSSYKLSHNLPENPPEVFNLDYPWDTSVFLERRTFYELQVFKKYGGSILRPFGVDPEYPFAHIFIPNPTDFSEDLLWMFWYLLNHFHILMKFRCSKFSKIDQVNPWMLKFLLWFNNHNYWASLFKCMKGIKKYVVIWFYRPVNYYQGKLCALPHSSIVKWNHVSVLNDEDEYSELQRFIFQENKCIPKEIWPGSSGSWNYGNSDHPHGQWIRDALREYREMNDYFQDAQDPYPAYSKVDLTQEELNTLRITRSYGSSSEDADMVKRSIYTVQSNIVKDSPRKRKGKAKSRSSTRSEKRRAKNKCKYRSLHGEDWWIELGYSTKPSTPSWTQDSSSEPCV</sequence>
<name>POLG_PVCV1</name>
<evidence type="ECO:0000250" key="1"/>
<evidence type="ECO:0000255" key="2">
    <source>
        <dbReference type="PROSITE-ProRule" id="PRU00047"/>
    </source>
</evidence>
<evidence type="ECO:0000255" key="3">
    <source>
        <dbReference type="PROSITE-ProRule" id="PRU00405"/>
    </source>
</evidence>
<evidence type="ECO:0000256" key="4">
    <source>
        <dbReference type="SAM" id="MobiDB-lite"/>
    </source>
</evidence>
<evidence type="ECO:0000305" key="5"/>
<organismHost>
    <name type="scientific">Petunia</name>
    <dbReference type="NCBI Taxonomy" id="4101"/>
</organismHost>
<dbReference type="EC" id="3.4.23.-"/>
<dbReference type="EC" id="2.7.7.49" evidence="3"/>
<dbReference type="EC" id="2.7.7.7" evidence="3"/>
<dbReference type="EMBL" id="U95208">
    <property type="protein sequence ID" value="AAK68664.1"/>
    <property type="molecule type" value="Genomic_DNA"/>
</dbReference>
<dbReference type="RefSeq" id="NP_127504.1">
    <property type="nucleotide sequence ID" value="NC_001839.2"/>
</dbReference>
<dbReference type="SMR" id="Q91DM0"/>
<dbReference type="GeneID" id="921337"/>
<dbReference type="KEGG" id="vg:921337"/>
<dbReference type="Proteomes" id="UP000002245">
    <property type="component" value="Segment"/>
</dbReference>
<dbReference type="GO" id="GO:0004190">
    <property type="term" value="F:aspartic-type endopeptidase activity"/>
    <property type="evidence" value="ECO:0007669"/>
    <property type="project" value="UniProtKB-KW"/>
</dbReference>
<dbReference type="GO" id="GO:0003677">
    <property type="term" value="F:DNA binding"/>
    <property type="evidence" value="ECO:0007669"/>
    <property type="project" value="UniProtKB-KW"/>
</dbReference>
<dbReference type="GO" id="GO:0003887">
    <property type="term" value="F:DNA-directed DNA polymerase activity"/>
    <property type="evidence" value="ECO:0007669"/>
    <property type="project" value="UniProtKB-EC"/>
</dbReference>
<dbReference type="GO" id="GO:0004519">
    <property type="term" value="F:endonuclease activity"/>
    <property type="evidence" value="ECO:0007669"/>
    <property type="project" value="UniProtKB-KW"/>
</dbReference>
<dbReference type="GO" id="GO:0003964">
    <property type="term" value="F:RNA-directed DNA polymerase activity"/>
    <property type="evidence" value="ECO:0007669"/>
    <property type="project" value="UniProtKB-KW"/>
</dbReference>
<dbReference type="GO" id="GO:0008270">
    <property type="term" value="F:zinc ion binding"/>
    <property type="evidence" value="ECO:0007669"/>
    <property type="project" value="UniProtKB-KW"/>
</dbReference>
<dbReference type="GO" id="GO:0006508">
    <property type="term" value="P:proteolysis"/>
    <property type="evidence" value="ECO:0007669"/>
    <property type="project" value="UniProtKB-KW"/>
</dbReference>
<dbReference type="GO" id="GO:0046740">
    <property type="term" value="P:transport of virus in host, cell to cell"/>
    <property type="evidence" value="ECO:0007669"/>
    <property type="project" value="UniProtKB-KW"/>
</dbReference>
<dbReference type="CDD" id="cd09274">
    <property type="entry name" value="RNase_HI_RT_Ty3"/>
    <property type="match status" value="1"/>
</dbReference>
<dbReference type="CDD" id="cd01647">
    <property type="entry name" value="RT_LTR"/>
    <property type="match status" value="1"/>
</dbReference>
<dbReference type="Gene3D" id="3.30.70.270">
    <property type="match status" value="2"/>
</dbReference>
<dbReference type="Gene3D" id="3.10.10.10">
    <property type="entry name" value="HIV Type 1 Reverse Transcriptase, subunit A, domain 1"/>
    <property type="match status" value="1"/>
</dbReference>
<dbReference type="Gene3D" id="4.10.60.10">
    <property type="entry name" value="Zinc finger, CCHC-type"/>
    <property type="match status" value="1"/>
</dbReference>
<dbReference type="InterPro" id="IPR043502">
    <property type="entry name" value="DNA/RNA_pol_sf"/>
</dbReference>
<dbReference type="InterPro" id="IPR053098">
    <property type="entry name" value="Petuviruses_polyprotein"/>
</dbReference>
<dbReference type="InterPro" id="IPR043128">
    <property type="entry name" value="Rev_trsase/Diguanyl_cyclase"/>
</dbReference>
<dbReference type="InterPro" id="IPR000477">
    <property type="entry name" value="RT_dom"/>
</dbReference>
<dbReference type="InterPro" id="IPR041577">
    <property type="entry name" value="RT_RNaseH_2"/>
</dbReference>
<dbReference type="InterPro" id="IPR028919">
    <property type="entry name" value="Viral_movement"/>
</dbReference>
<dbReference type="InterPro" id="IPR001878">
    <property type="entry name" value="Znf_CCHC"/>
</dbReference>
<dbReference type="InterPro" id="IPR036875">
    <property type="entry name" value="Znf_CCHC_sf"/>
</dbReference>
<dbReference type="PANTHER" id="PTHR48435">
    <property type="entry name" value="POLYPROTEIN"/>
    <property type="match status" value="1"/>
</dbReference>
<dbReference type="PANTHER" id="PTHR48435:SF1">
    <property type="entry name" value="POLYPROTEIN"/>
    <property type="match status" value="1"/>
</dbReference>
<dbReference type="Pfam" id="PF01107">
    <property type="entry name" value="MP"/>
    <property type="match status" value="1"/>
</dbReference>
<dbReference type="Pfam" id="PF17919">
    <property type="entry name" value="RT_RNaseH_2"/>
    <property type="match status" value="1"/>
</dbReference>
<dbReference type="Pfam" id="PF00078">
    <property type="entry name" value="RVT_1"/>
    <property type="match status" value="1"/>
</dbReference>
<dbReference type="Pfam" id="PF00098">
    <property type="entry name" value="zf-CCHC"/>
    <property type="match status" value="1"/>
</dbReference>
<dbReference type="SMART" id="SM00343">
    <property type="entry name" value="ZnF_C2HC"/>
    <property type="match status" value="1"/>
</dbReference>
<dbReference type="SUPFAM" id="SSF56672">
    <property type="entry name" value="DNA/RNA polymerases"/>
    <property type="match status" value="1"/>
</dbReference>
<dbReference type="SUPFAM" id="SSF57756">
    <property type="entry name" value="Retrovirus zinc finger-like domains"/>
    <property type="match status" value="1"/>
</dbReference>
<dbReference type="PROSITE" id="PS50878">
    <property type="entry name" value="RT_POL"/>
    <property type="match status" value="1"/>
</dbReference>
<dbReference type="PROSITE" id="PS50158">
    <property type="entry name" value="ZF_CCHC"/>
    <property type="match status" value="1"/>
</dbReference>